<name>EFGM_RAT</name>
<evidence type="ECO:0000250" key="1">
    <source>
        <dbReference type="UniProtKB" id="Q96RP9"/>
    </source>
</evidence>
<evidence type="ECO:0000255" key="2">
    <source>
        <dbReference type="HAMAP-Rule" id="MF_03061"/>
    </source>
</evidence>
<evidence type="ECO:0000305" key="3"/>
<keyword id="KW-0007">Acetylation</keyword>
<keyword id="KW-0903">Direct protein sequencing</keyword>
<keyword id="KW-0251">Elongation factor</keyword>
<keyword id="KW-0342">GTP-binding</keyword>
<keyword id="KW-0378">Hydrolase</keyword>
<keyword id="KW-0496">Mitochondrion</keyword>
<keyword id="KW-0547">Nucleotide-binding</keyword>
<keyword id="KW-0597">Phosphoprotein</keyword>
<keyword id="KW-0648">Protein biosynthesis</keyword>
<keyword id="KW-1185">Reference proteome</keyword>
<keyword id="KW-0809">Transit peptide</keyword>
<organism>
    <name type="scientific">Rattus norvegicus</name>
    <name type="common">Rat</name>
    <dbReference type="NCBI Taxonomy" id="10116"/>
    <lineage>
        <taxon>Eukaryota</taxon>
        <taxon>Metazoa</taxon>
        <taxon>Chordata</taxon>
        <taxon>Craniata</taxon>
        <taxon>Vertebrata</taxon>
        <taxon>Euteleostomi</taxon>
        <taxon>Mammalia</taxon>
        <taxon>Eutheria</taxon>
        <taxon>Euarchontoglires</taxon>
        <taxon>Glires</taxon>
        <taxon>Rodentia</taxon>
        <taxon>Myomorpha</taxon>
        <taxon>Muroidea</taxon>
        <taxon>Muridae</taxon>
        <taxon>Murinae</taxon>
        <taxon>Rattus</taxon>
    </lineage>
</organism>
<comment type="function">
    <text evidence="2">Mitochondrial GTPase that catalyzes the GTP-dependent ribosomal translocation step during translation elongation. During this step, the ribosome changes from the pre-translocational (PRE) to the post-translocational (POST) state as the newly formed A-site-bound peptidyl-tRNA and P-site-bound deacylated tRNA move to the P and E sites, respectively. Catalyzes the coordinated movement of the two tRNA molecules, the mRNA and conformational changes in the ribosome. Does not mediate the disassembly of ribosomes from messenger RNA at the termination of mitochondrial protein biosynthesis.</text>
</comment>
<comment type="catalytic activity">
    <reaction evidence="1">
        <text>GTP + H2O = GDP + phosphate + H(+)</text>
        <dbReference type="Rhea" id="RHEA:19669"/>
        <dbReference type="ChEBI" id="CHEBI:15377"/>
        <dbReference type="ChEBI" id="CHEBI:15378"/>
        <dbReference type="ChEBI" id="CHEBI:37565"/>
        <dbReference type="ChEBI" id="CHEBI:43474"/>
        <dbReference type="ChEBI" id="CHEBI:58189"/>
    </reaction>
    <physiologicalReaction direction="left-to-right" evidence="1">
        <dbReference type="Rhea" id="RHEA:19670"/>
    </physiologicalReaction>
</comment>
<comment type="pathway">
    <text evidence="2">Protein biosynthesis; polypeptide chain elongation.</text>
</comment>
<comment type="subcellular location">
    <subcellularLocation>
        <location>Mitochondrion</location>
    </subcellularLocation>
</comment>
<comment type="tissue specificity">
    <text>Detected in all tissues with the highest level in liver, thymus and brain.</text>
</comment>
<comment type="similarity">
    <text evidence="3">Belongs to the TRAFAC class translation factor GTPase superfamily. Classic translation factor GTPase family. EF-G/EF-2 subfamily.</text>
</comment>
<comment type="sequence caution" evidence="3">
    <conflict type="frameshift">
        <sequence resource="EMBL-CDS" id="AAA41107"/>
    </conflict>
</comment>
<gene>
    <name type="primary">Gfm1</name>
    <name type="synonym">Efg</name>
    <name type="synonym">Efg1</name>
    <name type="synonym">Gfm</name>
</gene>
<accession>Q07803</accession>
<accession>Q5U347</accession>
<sequence length="751" mass="83457">MRLLRITAGLGRGPLPRVPAILGWQGKQANWKTYRWCSSGSIPNEKIRNIGISAHIDSGKTTLTERVLYYTGRIATMHEVKGKDGVGAVMDSMELERQRGITIQSAATYTMWRDVNINIIDTPGHVDFTIEVERALRVLDGAVLVLCAVGGVQCQTMTVSRQMKRYNVPFLTFINKLDRMGSNPARALQQMRSKLNHNAAFVQIPIGLEGDFKGIIDLIEERAIYFDGDFGQIVRYDEIPADLRAAAADHRQELIECVANSDEQLGELFLEEKIPSVSDLKLAIRRATLSRSFTPVFLGSALKNKGVQPLLDAVLEFLPNPSEVQNYALLNQNDSKEKNKILMNPKRDDSHPFVGLAFKLEAGRFGQLTYVRNYQGELKKGSTIYNTRTGKKVRVQRLVRMHADMMEDVEEVYAGDICALFGIDCASGDTFTNKDNSDLSMESIHVPDPVISVAMKPSNKNDLEKFSKGIARFTREDPTFKVHFDTESKETIVSGMGELHLEIYAQRMEREYGCPCITGKPKVAFRETVTAPVPFDFTHKKQSGGAGQYGKVIGVLEPLAPEDYTKLEFSDETFGANVPKQFVPAVEKGFLDACEKGPLSGHKLSGLRFVLQDGAHHMVDSNEISFIRAGEGALKQALASATLCIIEPIMSVEVIAPNEFQGAVFAGINRRHGVITGQDGIEDYFTLYADVPLNNMFGYSTELRSCTEGKGEYTMEYNRYQPCSPSTQEELVNKYLEATGQLPVKKGKAKN</sequence>
<dbReference type="EC" id="3.6.5.-" evidence="1"/>
<dbReference type="EMBL" id="L14684">
    <property type="protein sequence ID" value="AAA41107.1"/>
    <property type="status" value="ALT_FRAME"/>
    <property type="molecule type" value="mRNA"/>
</dbReference>
<dbReference type="EMBL" id="CH473976">
    <property type="protein sequence ID" value="EDM00923.1"/>
    <property type="molecule type" value="Genomic_DNA"/>
</dbReference>
<dbReference type="EMBL" id="BC085721">
    <property type="protein sequence ID" value="AAH85721.1"/>
    <property type="molecule type" value="mRNA"/>
</dbReference>
<dbReference type="PIR" id="S40780">
    <property type="entry name" value="S40780"/>
</dbReference>
<dbReference type="RefSeq" id="NP_446077.2">
    <property type="nucleotide sequence ID" value="NM_053625.2"/>
</dbReference>
<dbReference type="SMR" id="Q07803"/>
<dbReference type="BioGRID" id="250256">
    <property type="interactions" value="1"/>
</dbReference>
<dbReference type="FunCoup" id="Q07803">
    <property type="interactions" value="2835"/>
</dbReference>
<dbReference type="STRING" id="10116.ENSRNOP00000040081"/>
<dbReference type="iPTMnet" id="Q07803"/>
<dbReference type="PhosphoSitePlus" id="Q07803"/>
<dbReference type="jPOST" id="Q07803"/>
<dbReference type="PaxDb" id="10116-ENSRNOP00000040081"/>
<dbReference type="GeneID" id="114017"/>
<dbReference type="KEGG" id="rno:114017"/>
<dbReference type="UCSC" id="RGD:631396">
    <property type="organism name" value="rat"/>
</dbReference>
<dbReference type="AGR" id="RGD:631396"/>
<dbReference type="CTD" id="85476"/>
<dbReference type="RGD" id="631396">
    <property type="gene designation" value="Gfm1"/>
</dbReference>
<dbReference type="VEuPathDB" id="HostDB:ENSRNOG00000012873"/>
<dbReference type="eggNOG" id="KOG0465">
    <property type="taxonomic scope" value="Eukaryota"/>
</dbReference>
<dbReference type="HOGENOM" id="CLU_002794_4_1_1"/>
<dbReference type="InParanoid" id="Q07803"/>
<dbReference type="PhylomeDB" id="Q07803"/>
<dbReference type="TreeFam" id="TF105631"/>
<dbReference type="Reactome" id="R-RNO-5389840">
    <property type="pathway name" value="Mitochondrial translation elongation"/>
</dbReference>
<dbReference type="UniPathway" id="UPA00345"/>
<dbReference type="PRO" id="PR:Q07803"/>
<dbReference type="Proteomes" id="UP000002494">
    <property type="component" value="Chromosome 2"/>
</dbReference>
<dbReference type="Proteomes" id="UP000234681">
    <property type="component" value="Chromosome 2"/>
</dbReference>
<dbReference type="Bgee" id="ENSRNOG00000012873">
    <property type="expression patterns" value="Expressed in heart and 20 other cell types or tissues"/>
</dbReference>
<dbReference type="ExpressionAtlas" id="Q07803">
    <property type="expression patterns" value="baseline and differential"/>
</dbReference>
<dbReference type="GO" id="GO:0005739">
    <property type="term" value="C:mitochondrion"/>
    <property type="evidence" value="ECO:0000318"/>
    <property type="project" value="GO_Central"/>
</dbReference>
<dbReference type="GO" id="GO:0005525">
    <property type="term" value="F:GTP binding"/>
    <property type="evidence" value="ECO:0007669"/>
    <property type="project" value="UniProtKB-UniRule"/>
</dbReference>
<dbReference type="GO" id="GO:0003924">
    <property type="term" value="F:GTPase activity"/>
    <property type="evidence" value="ECO:0000250"/>
    <property type="project" value="UniProtKB"/>
</dbReference>
<dbReference type="GO" id="GO:0003746">
    <property type="term" value="F:translation elongation factor activity"/>
    <property type="evidence" value="ECO:0000250"/>
    <property type="project" value="UniProtKB"/>
</dbReference>
<dbReference type="GO" id="GO:0070125">
    <property type="term" value="P:mitochondrial translational elongation"/>
    <property type="evidence" value="ECO:0000250"/>
    <property type="project" value="UniProtKB"/>
</dbReference>
<dbReference type="CDD" id="cd01886">
    <property type="entry name" value="EF-G"/>
    <property type="match status" value="1"/>
</dbReference>
<dbReference type="CDD" id="cd16262">
    <property type="entry name" value="EFG_III"/>
    <property type="match status" value="1"/>
</dbReference>
<dbReference type="CDD" id="cd01434">
    <property type="entry name" value="EFG_mtEFG1_IV"/>
    <property type="match status" value="1"/>
</dbReference>
<dbReference type="CDD" id="cd04097">
    <property type="entry name" value="mtEFG1_C"/>
    <property type="match status" value="1"/>
</dbReference>
<dbReference type="CDD" id="cd04091">
    <property type="entry name" value="mtEFG1_II_like"/>
    <property type="match status" value="1"/>
</dbReference>
<dbReference type="FunFam" id="3.30.230.10:FF:000003">
    <property type="entry name" value="Elongation factor G"/>
    <property type="match status" value="1"/>
</dbReference>
<dbReference type="FunFam" id="3.30.70.240:FF:000001">
    <property type="entry name" value="Elongation factor G"/>
    <property type="match status" value="1"/>
</dbReference>
<dbReference type="FunFam" id="2.40.30.10:FF:000022">
    <property type="entry name" value="Elongation factor G, mitochondrial"/>
    <property type="match status" value="1"/>
</dbReference>
<dbReference type="FunFam" id="3.30.70.870:FF:000008">
    <property type="entry name" value="Elongation factor G, mitochondrial"/>
    <property type="match status" value="1"/>
</dbReference>
<dbReference type="FunFam" id="3.40.50.300:FF:000539">
    <property type="entry name" value="Elongation factor G, mitochondrial"/>
    <property type="match status" value="1"/>
</dbReference>
<dbReference type="Gene3D" id="3.30.230.10">
    <property type="match status" value="1"/>
</dbReference>
<dbReference type="Gene3D" id="3.30.70.240">
    <property type="match status" value="1"/>
</dbReference>
<dbReference type="Gene3D" id="3.30.70.870">
    <property type="entry name" value="Elongation Factor G (Translational Gtpase), domain 3"/>
    <property type="match status" value="1"/>
</dbReference>
<dbReference type="Gene3D" id="3.40.50.300">
    <property type="entry name" value="P-loop containing nucleotide triphosphate hydrolases"/>
    <property type="match status" value="1"/>
</dbReference>
<dbReference type="Gene3D" id="2.40.30.10">
    <property type="entry name" value="Translation factors"/>
    <property type="match status" value="1"/>
</dbReference>
<dbReference type="HAMAP" id="MF_00054_B">
    <property type="entry name" value="EF_G_EF_2_B"/>
    <property type="match status" value="1"/>
</dbReference>
<dbReference type="InterPro" id="IPR041095">
    <property type="entry name" value="EFG_II"/>
</dbReference>
<dbReference type="InterPro" id="IPR009022">
    <property type="entry name" value="EFG_III"/>
</dbReference>
<dbReference type="InterPro" id="IPR035647">
    <property type="entry name" value="EFG_III/V"/>
</dbReference>
<dbReference type="InterPro" id="IPR047872">
    <property type="entry name" value="EFG_IV"/>
</dbReference>
<dbReference type="InterPro" id="IPR035649">
    <property type="entry name" value="EFG_V"/>
</dbReference>
<dbReference type="InterPro" id="IPR000640">
    <property type="entry name" value="EFG_V-like"/>
</dbReference>
<dbReference type="InterPro" id="IPR004161">
    <property type="entry name" value="EFTu-like_2"/>
</dbReference>
<dbReference type="InterPro" id="IPR031157">
    <property type="entry name" value="G_TR_CS"/>
</dbReference>
<dbReference type="InterPro" id="IPR027417">
    <property type="entry name" value="P-loop_NTPase"/>
</dbReference>
<dbReference type="InterPro" id="IPR020568">
    <property type="entry name" value="Ribosomal_Su5_D2-typ_SF"/>
</dbReference>
<dbReference type="InterPro" id="IPR014721">
    <property type="entry name" value="Ribsml_uS5_D2-typ_fold_subgr"/>
</dbReference>
<dbReference type="InterPro" id="IPR005225">
    <property type="entry name" value="Small_GTP-bd"/>
</dbReference>
<dbReference type="InterPro" id="IPR000795">
    <property type="entry name" value="T_Tr_GTP-bd_dom"/>
</dbReference>
<dbReference type="InterPro" id="IPR009000">
    <property type="entry name" value="Transl_B-barrel_sf"/>
</dbReference>
<dbReference type="InterPro" id="IPR004540">
    <property type="entry name" value="Transl_elong_EFG/EF2"/>
</dbReference>
<dbReference type="InterPro" id="IPR005517">
    <property type="entry name" value="Transl_elong_EFG/EF2_IV"/>
</dbReference>
<dbReference type="NCBIfam" id="TIGR00484">
    <property type="entry name" value="EF-G"/>
    <property type="match status" value="1"/>
</dbReference>
<dbReference type="NCBIfam" id="NF009381">
    <property type="entry name" value="PRK12740.1-5"/>
    <property type="match status" value="1"/>
</dbReference>
<dbReference type="NCBIfam" id="TIGR00231">
    <property type="entry name" value="small_GTP"/>
    <property type="match status" value="1"/>
</dbReference>
<dbReference type="PANTHER" id="PTHR43636">
    <property type="entry name" value="ELONGATION FACTOR G, MITOCHONDRIAL"/>
    <property type="match status" value="1"/>
</dbReference>
<dbReference type="PANTHER" id="PTHR43636:SF2">
    <property type="entry name" value="ELONGATION FACTOR G, MITOCHONDRIAL"/>
    <property type="match status" value="1"/>
</dbReference>
<dbReference type="Pfam" id="PF00679">
    <property type="entry name" value="EFG_C"/>
    <property type="match status" value="1"/>
</dbReference>
<dbReference type="Pfam" id="PF14492">
    <property type="entry name" value="EFG_III"/>
    <property type="match status" value="1"/>
</dbReference>
<dbReference type="Pfam" id="PF03764">
    <property type="entry name" value="EFG_IV"/>
    <property type="match status" value="1"/>
</dbReference>
<dbReference type="Pfam" id="PF00009">
    <property type="entry name" value="GTP_EFTU"/>
    <property type="match status" value="1"/>
</dbReference>
<dbReference type="Pfam" id="PF03144">
    <property type="entry name" value="GTP_EFTU_D2"/>
    <property type="match status" value="1"/>
</dbReference>
<dbReference type="PRINTS" id="PR00315">
    <property type="entry name" value="ELONGATNFCT"/>
</dbReference>
<dbReference type="SMART" id="SM00838">
    <property type="entry name" value="EFG_C"/>
    <property type="match status" value="1"/>
</dbReference>
<dbReference type="SMART" id="SM00889">
    <property type="entry name" value="EFG_IV"/>
    <property type="match status" value="1"/>
</dbReference>
<dbReference type="SUPFAM" id="SSF54980">
    <property type="entry name" value="EF-G C-terminal domain-like"/>
    <property type="match status" value="2"/>
</dbReference>
<dbReference type="SUPFAM" id="SSF52540">
    <property type="entry name" value="P-loop containing nucleoside triphosphate hydrolases"/>
    <property type="match status" value="1"/>
</dbReference>
<dbReference type="SUPFAM" id="SSF54211">
    <property type="entry name" value="Ribosomal protein S5 domain 2-like"/>
    <property type="match status" value="1"/>
</dbReference>
<dbReference type="SUPFAM" id="SSF50447">
    <property type="entry name" value="Translation proteins"/>
    <property type="match status" value="1"/>
</dbReference>
<dbReference type="PROSITE" id="PS00301">
    <property type="entry name" value="G_TR_1"/>
    <property type="match status" value="1"/>
</dbReference>
<dbReference type="PROSITE" id="PS51722">
    <property type="entry name" value="G_TR_2"/>
    <property type="match status" value="1"/>
</dbReference>
<reference key="1">
    <citation type="journal article" date="1993" name="Nucleic Acids Res.">
        <title>Identification of the gene encoding the mitochondrial elongation factor G in mammals.</title>
        <authorList>
            <person name="Barker C.S."/>
            <person name="Makris A."/>
            <person name="Patriotis C."/>
            <person name="Bear S.E."/>
            <person name="Tsichlis P.N."/>
        </authorList>
    </citation>
    <scope>NUCLEOTIDE SEQUENCE [MRNA]</scope>
</reference>
<reference key="2">
    <citation type="submission" date="2005-09" db="EMBL/GenBank/DDBJ databases">
        <authorList>
            <person name="Mural R.J."/>
            <person name="Adams M.D."/>
            <person name="Myers E.W."/>
            <person name="Smith H.O."/>
            <person name="Venter J.C."/>
        </authorList>
    </citation>
    <scope>NUCLEOTIDE SEQUENCE [LARGE SCALE GENOMIC DNA]</scope>
</reference>
<reference key="3">
    <citation type="journal article" date="2004" name="Genome Res.">
        <title>The status, quality, and expansion of the NIH full-length cDNA project: the Mammalian Gene Collection (MGC).</title>
        <authorList>
            <consortium name="The MGC Project Team"/>
        </authorList>
    </citation>
    <scope>NUCLEOTIDE SEQUENCE [LARGE SCALE MRNA]</scope>
    <source>
        <tissue>Heart</tissue>
    </source>
</reference>
<reference key="4">
    <citation type="submission" date="2007-04" db="UniProtKB">
        <authorList>
            <person name="Lubec G."/>
            <person name="Diao W."/>
        </authorList>
    </citation>
    <scope>PROTEIN SEQUENCE OF 214-222 AND 292-303</scope>
    <scope>IDENTIFICATION BY MASS SPECTROMETRY</scope>
    <source>
        <strain>Sprague-Dawley</strain>
        <tissue>Hippocampus</tissue>
    </source>
</reference>
<proteinExistence type="evidence at protein level"/>
<feature type="transit peptide" description="Mitochondrion" evidence="2">
    <location>
        <begin position="1"/>
        <end position="37"/>
    </location>
</feature>
<feature type="chain" id="PRO_0000007443" description="Elongation factor G, mitochondrial">
    <location>
        <begin position="38"/>
        <end position="751"/>
    </location>
</feature>
<feature type="domain" description="tr-type G">
    <location>
        <begin position="45"/>
        <end position="322"/>
    </location>
</feature>
<feature type="binding site" evidence="2">
    <location>
        <begin position="54"/>
        <end position="61"/>
    </location>
    <ligand>
        <name>GTP</name>
        <dbReference type="ChEBI" id="CHEBI:37565"/>
    </ligand>
</feature>
<feature type="binding site" evidence="2">
    <location>
        <begin position="121"/>
        <end position="125"/>
    </location>
    <ligand>
        <name>GTP</name>
        <dbReference type="ChEBI" id="CHEBI:37565"/>
    </ligand>
</feature>
<feature type="binding site" evidence="2">
    <location>
        <begin position="175"/>
        <end position="178"/>
    </location>
    <ligand>
        <name>GTP</name>
        <dbReference type="ChEBI" id="CHEBI:37565"/>
    </ligand>
</feature>
<feature type="modified residue" description="Phosphoserine" evidence="1">
    <location>
        <position position="92"/>
    </location>
</feature>
<feature type="modified residue" description="N6-acetyllysine" evidence="1">
    <location>
        <position position="176"/>
    </location>
</feature>
<feature type="sequence conflict" description="In Ref. 1; AAA41107." evidence="3" ref="1">
    <original>Q</original>
    <variation>P</variation>
    <location>
        <position position="252"/>
    </location>
</feature>
<feature type="sequence conflict" description="In Ref. 1; AAA41107." evidence="3" ref="1">
    <original>G</original>
    <variation>R</variation>
    <location>
        <position position="306"/>
    </location>
</feature>
<feature type="sequence conflict" description="In Ref. 1; AAA41107." evidence="3" ref="1">
    <original>S</original>
    <variation>L</variation>
    <location>
        <position position="335"/>
    </location>
</feature>
<feature type="sequence conflict" description="In Ref. 1; AAA41107." evidence="3" ref="1">
    <original>N</original>
    <variation>K</variation>
    <location>
        <position position="339"/>
    </location>
</feature>
<feature type="sequence conflict" description="In Ref. 1; AAA41107." evidence="3" ref="1">
    <original>YT</original>
    <variation>LP</variation>
    <location>
        <begin position="564"/>
        <end position="565"/>
    </location>
</feature>
<feature type="sequence conflict" description="In Ref. 1; AAA41107." evidence="3" ref="1">
    <original>T</original>
    <variation>I</variation>
    <location>
        <position position="739"/>
    </location>
</feature>
<protein>
    <recommendedName>
        <fullName evidence="2">Elongation factor G, mitochondrial</fullName>
        <shortName evidence="2">EF-Gmt</shortName>
        <ecNumber evidence="1">3.6.5.-</ecNumber>
    </recommendedName>
    <alternativeName>
        <fullName evidence="2">Elongation factor G 1, mitochondrial</fullName>
        <shortName evidence="2">mEF-G 1</shortName>
    </alternativeName>
    <alternativeName>
        <fullName evidence="2">Elongation factor G1</fullName>
    </alternativeName>
</protein>